<keyword id="KW-0963">Cytoplasm</keyword>
<keyword id="KW-0378">Hydrolase</keyword>
<keyword id="KW-0694">RNA-binding</keyword>
<keyword id="KW-0820">tRNA-binding</keyword>
<gene>
    <name evidence="1" type="primary">dtd</name>
    <name type="ordered locus">Acid_6717</name>
</gene>
<feature type="chain" id="PRO_1000050891" description="D-aminoacyl-tRNA deacylase">
    <location>
        <begin position="1"/>
        <end position="151"/>
    </location>
</feature>
<feature type="short sequence motif" description="Gly-cisPro motif, important for rejection of L-amino acids" evidence="1">
    <location>
        <begin position="137"/>
        <end position="138"/>
    </location>
</feature>
<protein>
    <recommendedName>
        <fullName evidence="1">D-aminoacyl-tRNA deacylase</fullName>
        <shortName evidence="1">DTD</shortName>
        <ecNumber evidence="1">3.1.1.96</ecNumber>
    </recommendedName>
    <alternativeName>
        <fullName evidence="1">Gly-tRNA(Ala) deacylase</fullName>
    </alternativeName>
</protein>
<accession>Q01RT2</accession>
<comment type="function">
    <text evidence="1">An aminoacyl-tRNA editing enzyme that deacylates mischarged D-aminoacyl-tRNAs. Also deacylates mischarged glycyl-tRNA(Ala), protecting cells against glycine mischarging by AlaRS. Acts via tRNA-based rather than protein-based catalysis; rejects L-amino acids rather than detecting D-amino acids in the active site. By recycling D-aminoacyl-tRNA to D-amino acids and free tRNA molecules, this enzyme counteracts the toxicity associated with the formation of D-aminoacyl-tRNA entities in vivo and helps enforce protein L-homochirality.</text>
</comment>
<comment type="catalytic activity">
    <reaction evidence="1">
        <text>glycyl-tRNA(Ala) + H2O = tRNA(Ala) + glycine + H(+)</text>
        <dbReference type="Rhea" id="RHEA:53744"/>
        <dbReference type="Rhea" id="RHEA-COMP:9657"/>
        <dbReference type="Rhea" id="RHEA-COMP:13640"/>
        <dbReference type="ChEBI" id="CHEBI:15377"/>
        <dbReference type="ChEBI" id="CHEBI:15378"/>
        <dbReference type="ChEBI" id="CHEBI:57305"/>
        <dbReference type="ChEBI" id="CHEBI:78442"/>
        <dbReference type="ChEBI" id="CHEBI:78522"/>
        <dbReference type="EC" id="3.1.1.96"/>
    </reaction>
</comment>
<comment type="catalytic activity">
    <reaction evidence="1">
        <text>a D-aminoacyl-tRNA + H2O = a tRNA + a D-alpha-amino acid + H(+)</text>
        <dbReference type="Rhea" id="RHEA:13953"/>
        <dbReference type="Rhea" id="RHEA-COMP:10123"/>
        <dbReference type="Rhea" id="RHEA-COMP:10124"/>
        <dbReference type="ChEBI" id="CHEBI:15377"/>
        <dbReference type="ChEBI" id="CHEBI:15378"/>
        <dbReference type="ChEBI" id="CHEBI:59871"/>
        <dbReference type="ChEBI" id="CHEBI:78442"/>
        <dbReference type="ChEBI" id="CHEBI:79333"/>
        <dbReference type="EC" id="3.1.1.96"/>
    </reaction>
</comment>
<comment type="subunit">
    <text evidence="1">Homodimer.</text>
</comment>
<comment type="subcellular location">
    <subcellularLocation>
        <location evidence="1">Cytoplasm</location>
    </subcellularLocation>
</comment>
<comment type="domain">
    <text evidence="1">A Gly-cisPro motif from one monomer fits into the active site of the other monomer to allow specific chiral rejection of L-amino acids.</text>
</comment>
<comment type="similarity">
    <text evidence="1">Belongs to the DTD family.</text>
</comment>
<name>DTD_SOLUE</name>
<reference key="1">
    <citation type="journal article" date="2009" name="Appl. Environ. Microbiol.">
        <title>Three genomes from the phylum Acidobacteria provide insight into the lifestyles of these microorganisms in soils.</title>
        <authorList>
            <person name="Ward N.L."/>
            <person name="Challacombe J.F."/>
            <person name="Janssen P.H."/>
            <person name="Henrissat B."/>
            <person name="Coutinho P.M."/>
            <person name="Wu M."/>
            <person name="Xie G."/>
            <person name="Haft D.H."/>
            <person name="Sait M."/>
            <person name="Badger J."/>
            <person name="Barabote R.D."/>
            <person name="Bradley B."/>
            <person name="Brettin T.S."/>
            <person name="Brinkac L.M."/>
            <person name="Bruce D."/>
            <person name="Creasy T."/>
            <person name="Daugherty S.C."/>
            <person name="Davidsen T.M."/>
            <person name="DeBoy R.T."/>
            <person name="Detter J.C."/>
            <person name="Dodson R.J."/>
            <person name="Durkin A.S."/>
            <person name="Ganapathy A."/>
            <person name="Gwinn-Giglio M."/>
            <person name="Han C.S."/>
            <person name="Khouri H."/>
            <person name="Kiss H."/>
            <person name="Kothari S.P."/>
            <person name="Madupu R."/>
            <person name="Nelson K.E."/>
            <person name="Nelson W.C."/>
            <person name="Paulsen I."/>
            <person name="Penn K."/>
            <person name="Ren Q."/>
            <person name="Rosovitz M.J."/>
            <person name="Selengut J.D."/>
            <person name="Shrivastava S."/>
            <person name="Sullivan S.A."/>
            <person name="Tapia R."/>
            <person name="Thompson L.S."/>
            <person name="Watkins K.L."/>
            <person name="Yang Q."/>
            <person name="Yu C."/>
            <person name="Zafar N."/>
            <person name="Zhou L."/>
            <person name="Kuske C.R."/>
        </authorList>
    </citation>
    <scope>NUCLEOTIDE SEQUENCE [LARGE SCALE GENOMIC DNA]</scope>
    <source>
        <strain>Ellin6076</strain>
    </source>
</reference>
<sequence length="151" mass="16476">MKLVIQRVSQAHVNVEGTTVGAIRTGLVVLVGISKSDTIKDADYLADKVLGLRIFPDNEGKMNRNVAEAHGAILIISQFTLYGDCRRGRRPSFDAAAAPGEALTLYNYFVDTVRKSPVPVETGTFQATMEVSLVNQGPVTIVIESEERNRK</sequence>
<proteinExistence type="inferred from homology"/>
<organism>
    <name type="scientific">Solibacter usitatus (strain Ellin6076)</name>
    <dbReference type="NCBI Taxonomy" id="234267"/>
    <lineage>
        <taxon>Bacteria</taxon>
        <taxon>Pseudomonadati</taxon>
        <taxon>Acidobacteriota</taxon>
        <taxon>Terriglobia</taxon>
        <taxon>Bryobacterales</taxon>
        <taxon>Solibacteraceae</taxon>
        <taxon>Candidatus Solibacter</taxon>
    </lineage>
</organism>
<evidence type="ECO:0000255" key="1">
    <source>
        <dbReference type="HAMAP-Rule" id="MF_00518"/>
    </source>
</evidence>
<dbReference type="EC" id="3.1.1.96" evidence="1"/>
<dbReference type="EMBL" id="CP000473">
    <property type="protein sequence ID" value="ABJ87638.1"/>
    <property type="molecule type" value="Genomic_DNA"/>
</dbReference>
<dbReference type="SMR" id="Q01RT2"/>
<dbReference type="FunCoup" id="Q01RT2">
    <property type="interactions" value="497"/>
</dbReference>
<dbReference type="STRING" id="234267.Acid_6717"/>
<dbReference type="KEGG" id="sus:Acid_6717"/>
<dbReference type="eggNOG" id="COG1490">
    <property type="taxonomic scope" value="Bacteria"/>
</dbReference>
<dbReference type="HOGENOM" id="CLU_076901_1_0_0"/>
<dbReference type="InParanoid" id="Q01RT2"/>
<dbReference type="OrthoDB" id="9801395at2"/>
<dbReference type="GO" id="GO:0005737">
    <property type="term" value="C:cytoplasm"/>
    <property type="evidence" value="ECO:0007669"/>
    <property type="project" value="UniProtKB-SubCell"/>
</dbReference>
<dbReference type="GO" id="GO:0051500">
    <property type="term" value="F:D-tyrosyl-tRNA(Tyr) deacylase activity"/>
    <property type="evidence" value="ECO:0007669"/>
    <property type="project" value="TreeGrafter"/>
</dbReference>
<dbReference type="GO" id="GO:0106026">
    <property type="term" value="F:Gly-tRNA(Ala) deacylase activity"/>
    <property type="evidence" value="ECO:0007669"/>
    <property type="project" value="UniProtKB-UniRule"/>
</dbReference>
<dbReference type="GO" id="GO:0043908">
    <property type="term" value="F:Ser(Gly)-tRNA(Ala) hydrolase activity"/>
    <property type="evidence" value="ECO:0007669"/>
    <property type="project" value="UniProtKB-UniRule"/>
</dbReference>
<dbReference type="GO" id="GO:0000049">
    <property type="term" value="F:tRNA binding"/>
    <property type="evidence" value="ECO:0007669"/>
    <property type="project" value="UniProtKB-UniRule"/>
</dbReference>
<dbReference type="GO" id="GO:0019478">
    <property type="term" value="P:D-amino acid catabolic process"/>
    <property type="evidence" value="ECO:0007669"/>
    <property type="project" value="UniProtKB-UniRule"/>
</dbReference>
<dbReference type="CDD" id="cd00563">
    <property type="entry name" value="Dtyr_deacylase"/>
    <property type="match status" value="1"/>
</dbReference>
<dbReference type="FunFam" id="3.50.80.10:FF:000001">
    <property type="entry name" value="D-aminoacyl-tRNA deacylase"/>
    <property type="match status" value="1"/>
</dbReference>
<dbReference type="Gene3D" id="3.50.80.10">
    <property type="entry name" value="D-tyrosyl-tRNA(Tyr) deacylase"/>
    <property type="match status" value="1"/>
</dbReference>
<dbReference type="HAMAP" id="MF_00518">
    <property type="entry name" value="Deacylase_Dtd"/>
    <property type="match status" value="1"/>
</dbReference>
<dbReference type="InterPro" id="IPR003732">
    <property type="entry name" value="Daa-tRNA_deacyls_DTD"/>
</dbReference>
<dbReference type="InterPro" id="IPR023509">
    <property type="entry name" value="DTD-like_sf"/>
</dbReference>
<dbReference type="NCBIfam" id="TIGR00256">
    <property type="entry name" value="D-aminoacyl-tRNA deacylase"/>
    <property type="match status" value="1"/>
</dbReference>
<dbReference type="PANTHER" id="PTHR10472:SF5">
    <property type="entry name" value="D-AMINOACYL-TRNA DEACYLASE 1"/>
    <property type="match status" value="1"/>
</dbReference>
<dbReference type="PANTHER" id="PTHR10472">
    <property type="entry name" value="D-TYROSYL-TRNA TYR DEACYLASE"/>
    <property type="match status" value="1"/>
</dbReference>
<dbReference type="Pfam" id="PF02580">
    <property type="entry name" value="Tyr_Deacylase"/>
    <property type="match status" value="1"/>
</dbReference>
<dbReference type="SUPFAM" id="SSF69500">
    <property type="entry name" value="DTD-like"/>
    <property type="match status" value="1"/>
</dbReference>